<name>CYB_PONBL</name>
<accession>Q9MG84</accession>
<protein>
    <recommendedName>
        <fullName>Cytochrome b</fullName>
    </recommendedName>
    <alternativeName>
        <fullName>Complex III subunit 3</fullName>
    </alternativeName>
    <alternativeName>
        <fullName>Complex III subunit III</fullName>
    </alternativeName>
    <alternativeName>
        <fullName>Cytochrome b-c1 complex subunit 3</fullName>
    </alternativeName>
    <alternativeName>
        <fullName>Ubiquinol-cytochrome-c reductase complex cytochrome b subunit</fullName>
    </alternativeName>
</protein>
<sequence length="379" mass="42819">MTNIRKTHPLVKILNNAFIDLPTPSNISSWWNFGSLLGLCLIIQIMTGLFLAMHYTPDTSTAFSSVAHICRDVNYGWLIRYLHANGASMFFICLYMHIGRGLYYGSYAFRETWNIGVLLLLAVMATAFVGYVLPWGQMSFWGATVITNLLSAIPYIGTTLVEWIWGGFSVDKATLTRFFAFHFILPFIITALVMVHLLFLHETGSNNPTGISSNMDAIPFHPYYTIKDILGALLMILTMLTLTLFTPDLLGDPDNYIPANPMNTPEHIKPEWYFLFAYAILRSIPNKLGGVLALLFSILILFLVPMLQTAKQRSMMFRPLSQLLFWILIADLLTLTWIGSQPVEQPYIIVGQLASALYFLLILVLMPTASLIENKLLNW</sequence>
<feature type="chain" id="PRO_0000061431" description="Cytochrome b">
    <location>
        <begin position="1"/>
        <end position="379"/>
    </location>
</feature>
<feature type="transmembrane region" description="Helical" evidence="2">
    <location>
        <begin position="33"/>
        <end position="53"/>
    </location>
</feature>
<feature type="transmembrane region" description="Helical" evidence="2">
    <location>
        <begin position="77"/>
        <end position="98"/>
    </location>
</feature>
<feature type="transmembrane region" description="Helical" evidence="2">
    <location>
        <begin position="113"/>
        <end position="133"/>
    </location>
</feature>
<feature type="transmembrane region" description="Helical" evidence="2">
    <location>
        <begin position="178"/>
        <end position="198"/>
    </location>
</feature>
<feature type="transmembrane region" description="Helical" evidence="2">
    <location>
        <begin position="226"/>
        <end position="246"/>
    </location>
</feature>
<feature type="transmembrane region" description="Helical" evidence="2">
    <location>
        <begin position="288"/>
        <end position="308"/>
    </location>
</feature>
<feature type="transmembrane region" description="Helical" evidence="2">
    <location>
        <begin position="320"/>
        <end position="340"/>
    </location>
</feature>
<feature type="transmembrane region" description="Helical" evidence="2">
    <location>
        <begin position="347"/>
        <end position="367"/>
    </location>
</feature>
<feature type="binding site" description="axial binding residue" evidence="2">
    <location>
        <position position="83"/>
    </location>
    <ligand>
        <name>heme b</name>
        <dbReference type="ChEBI" id="CHEBI:60344"/>
        <label>b562</label>
    </ligand>
    <ligandPart>
        <name>Fe</name>
        <dbReference type="ChEBI" id="CHEBI:18248"/>
    </ligandPart>
</feature>
<feature type="binding site" description="axial binding residue" evidence="2">
    <location>
        <position position="97"/>
    </location>
    <ligand>
        <name>heme b</name>
        <dbReference type="ChEBI" id="CHEBI:60344"/>
        <label>b566</label>
    </ligand>
    <ligandPart>
        <name>Fe</name>
        <dbReference type="ChEBI" id="CHEBI:18248"/>
    </ligandPart>
</feature>
<feature type="binding site" description="axial binding residue" evidence="2">
    <location>
        <position position="182"/>
    </location>
    <ligand>
        <name>heme b</name>
        <dbReference type="ChEBI" id="CHEBI:60344"/>
        <label>b562</label>
    </ligand>
    <ligandPart>
        <name>Fe</name>
        <dbReference type="ChEBI" id="CHEBI:18248"/>
    </ligandPart>
</feature>
<feature type="binding site" description="axial binding residue" evidence="2">
    <location>
        <position position="196"/>
    </location>
    <ligand>
        <name>heme b</name>
        <dbReference type="ChEBI" id="CHEBI:60344"/>
        <label>b566</label>
    </ligand>
    <ligandPart>
        <name>Fe</name>
        <dbReference type="ChEBI" id="CHEBI:18248"/>
    </ligandPart>
</feature>
<feature type="binding site" evidence="2">
    <location>
        <position position="201"/>
    </location>
    <ligand>
        <name>a ubiquinone</name>
        <dbReference type="ChEBI" id="CHEBI:16389"/>
    </ligand>
</feature>
<reference key="1">
    <citation type="submission" date="2000-01" db="EMBL/GenBank/DDBJ databases">
        <title>Molecular systematics of river dolphins inferred from complete mitochondrial cytochrome b gene sequences.</title>
        <authorList>
            <person name="Yang G."/>
            <person name="Zhou K."/>
            <person name="Liu S."/>
            <person name="Bastida R."/>
            <person name="Rivero L."/>
        </authorList>
    </citation>
    <scope>NUCLEOTIDE SEQUENCE [GENOMIC DNA]</scope>
</reference>
<reference key="2">
    <citation type="journal article" date="2001" name="Proc. R. Soc. B">
        <title>Evolution of river dolphins.</title>
        <authorList>
            <person name="Hamilton H."/>
            <person name="Caballero S."/>
            <person name="Collins A.G."/>
            <person name="Brownell R.L. Jr."/>
        </authorList>
    </citation>
    <scope>NUCLEOTIDE SEQUENCE [GENOMIC DNA]</scope>
</reference>
<geneLocation type="mitochondrion"/>
<keyword id="KW-0249">Electron transport</keyword>
<keyword id="KW-0349">Heme</keyword>
<keyword id="KW-0408">Iron</keyword>
<keyword id="KW-0472">Membrane</keyword>
<keyword id="KW-0479">Metal-binding</keyword>
<keyword id="KW-0496">Mitochondrion</keyword>
<keyword id="KW-0999">Mitochondrion inner membrane</keyword>
<keyword id="KW-0679">Respiratory chain</keyword>
<keyword id="KW-0812">Transmembrane</keyword>
<keyword id="KW-1133">Transmembrane helix</keyword>
<keyword id="KW-0813">Transport</keyword>
<keyword id="KW-0830">Ubiquinone</keyword>
<proteinExistence type="inferred from homology"/>
<organism>
    <name type="scientific">Pontoporia blainvillei</name>
    <name type="common">Franciscana</name>
    <name type="synonym">Delphinus blainvillei</name>
    <dbReference type="NCBI Taxonomy" id="48723"/>
    <lineage>
        <taxon>Eukaryota</taxon>
        <taxon>Metazoa</taxon>
        <taxon>Chordata</taxon>
        <taxon>Craniata</taxon>
        <taxon>Vertebrata</taxon>
        <taxon>Euteleostomi</taxon>
        <taxon>Mammalia</taxon>
        <taxon>Eutheria</taxon>
        <taxon>Laurasiatheria</taxon>
        <taxon>Artiodactyla</taxon>
        <taxon>Whippomorpha</taxon>
        <taxon>Cetacea</taxon>
        <taxon>Odontoceti</taxon>
        <taxon>Pontoporiidae</taxon>
        <taxon>Pontoporia</taxon>
    </lineage>
</organism>
<evidence type="ECO:0000250" key="1"/>
<evidence type="ECO:0000250" key="2">
    <source>
        <dbReference type="UniProtKB" id="P00157"/>
    </source>
</evidence>
<evidence type="ECO:0000255" key="3">
    <source>
        <dbReference type="PROSITE-ProRule" id="PRU00967"/>
    </source>
</evidence>
<evidence type="ECO:0000255" key="4">
    <source>
        <dbReference type="PROSITE-ProRule" id="PRU00968"/>
    </source>
</evidence>
<dbReference type="EMBL" id="AF229170">
    <property type="protein sequence ID" value="AAF82411.1"/>
    <property type="molecule type" value="Genomic_DNA"/>
</dbReference>
<dbReference type="EMBL" id="AF334488">
    <property type="protein sequence ID" value="AAK01729.1"/>
    <property type="molecule type" value="Genomic_DNA"/>
</dbReference>
<dbReference type="SMR" id="Q9MG84"/>
<dbReference type="GO" id="GO:0005743">
    <property type="term" value="C:mitochondrial inner membrane"/>
    <property type="evidence" value="ECO:0007669"/>
    <property type="project" value="UniProtKB-SubCell"/>
</dbReference>
<dbReference type="GO" id="GO:0045275">
    <property type="term" value="C:respiratory chain complex III"/>
    <property type="evidence" value="ECO:0007669"/>
    <property type="project" value="InterPro"/>
</dbReference>
<dbReference type="GO" id="GO:0046872">
    <property type="term" value="F:metal ion binding"/>
    <property type="evidence" value="ECO:0007669"/>
    <property type="project" value="UniProtKB-KW"/>
</dbReference>
<dbReference type="GO" id="GO:0008121">
    <property type="term" value="F:ubiquinol-cytochrome-c reductase activity"/>
    <property type="evidence" value="ECO:0007669"/>
    <property type="project" value="InterPro"/>
</dbReference>
<dbReference type="GO" id="GO:0006122">
    <property type="term" value="P:mitochondrial electron transport, ubiquinol to cytochrome c"/>
    <property type="evidence" value="ECO:0007669"/>
    <property type="project" value="TreeGrafter"/>
</dbReference>
<dbReference type="CDD" id="cd00290">
    <property type="entry name" value="cytochrome_b_C"/>
    <property type="match status" value="1"/>
</dbReference>
<dbReference type="CDD" id="cd00284">
    <property type="entry name" value="Cytochrome_b_N"/>
    <property type="match status" value="1"/>
</dbReference>
<dbReference type="FunFam" id="1.20.810.10:FF:000002">
    <property type="entry name" value="Cytochrome b"/>
    <property type="match status" value="1"/>
</dbReference>
<dbReference type="Gene3D" id="1.20.810.10">
    <property type="entry name" value="Cytochrome Bc1 Complex, Chain C"/>
    <property type="match status" value="1"/>
</dbReference>
<dbReference type="InterPro" id="IPR005798">
    <property type="entry name" value="Cyt_b/b6_C"/>
</dbReference>
<dbReference type="InterPro" id="IPR036150">
    <property type="entry name" value="Cyt_b/b6_C_sf"/>
</dbReference>
<dbReference type="InterPro" id="IPR005797">
    <property type="entry name" value="Cyt_b/b6_N"/>
</dbReference>
<dbReference type="InterPro" id="IPR027387">
    <property type="entry name" value="Cytb/b6-like_sf"/>
</dbReference>
<dbReference type="InterPro" id="IPR030689">
    <property type="entry name" value="Cytochrome_b"/>
</dbReference>
<dbReference type="InterPro" id="IPR048260">
    <property type="entry name" value="Cytochrome_b_C_euk/bac"/>
</dbReference>
<dbReference type="InterPro" id="IPR048259">
    <property type="entry name" value="Cytochrome_b_N_euk/bac"/>
</dbReference>
<dbReference type="InterPro" id="IPR016174">
    <property type="entry name" value="Di-haem_cyt_TM"/>
</dbReference>
<dbReference type="PANTHER" id="PTHR19271">
    <property type="entry name" value="CYTOCHROME B"/>
    <property type="match status" value="1"/>
</dbReference>
<dbReference type="PANTHER" id="PTHR19271:SF16">
    <property type="entry name" value="CYTOCHROME B"/>
    <property type="match status" value="1"/>
</dbReference>
<dbReference type="Pfam" id="PF00032">
    <property type="entry name" value="Cytochrom_B_C"/>
    <property type="match status" value="1"/>
</dbReference>
<dbReference type="Pfam" id="PF00033">
    <property type="entry name" value="Cytochrome_B"/>
    <property type="match status" value="1"/>
</dbReference>
<dbReference type="PIRSF" id="PIRSF038885">
    <property type="entry name" value="COB"/>
    <property type="match status" value="1"/>
</dbReference>
<dbReference type="SUPFAM" id="SSF81648">
    <property type="entry name" value="a domain/subunit of cytochrome bc1 complex (Ubiquinol-cytochrome c reductase)"/>
    <property type="match status" value="1"/>
</dbReference>
<dbReference type="SUPFAM" id="SSF81342">
    <property type="entry name" value="Transmembrane di-heme cytochromes"/>
    <property type="match status" value="1"/>
</dbReference>
<dbReference type="PROSITE" id="PS51003">
    <property type="entry name" value="CYTB_CTER"/>
    <property type="match status" value="1"/>
</dbReference>
<dbReference type="PROSITE" id="PS51002">
    <property type="entry name" value="CYTB_NTER"/>
    <property type="match status" value="1"/>
</dbReference>
<comment type="function">
    <text evidence="2">Component of the ubiquinol-cytochrome c reductase complex (complex III or cytochrome b-c1 complex) that is part of the mitochondrial respiratory chain. The b-c1 complex mediates electron transfer from ubiquinol to cytochrome c. Contributes to the generation of a proton gradient across the mitochondrial membrane that is then used for ATP synthesis.</text>
</comment>
<comment type="cofactor">
    <cofactor evidence="2">
        <name>heme b</name>
        <dbReference type="ChEBI" id="CHEBI:60344"/>
    </cofactor>
    <text evidence="2">Binds 2 heme b groups non-covalently.</text>
</comment>
<comment type="subunit">
    <text evidence="2">The cytochrome bc1 complex contains 11 subunits: 3 respiratory subunits (MT-CYB, CYC1 and UQCRFS1), 2 core proteins (UQCRC1 and UQCRC2) and 6 low-molecular weight proteins (UQCRH/QCR6, UQCRB/QCR7, UQCRQ/QCR8, UQCR10/QCR9, UQCR11/QCR10 and a cleavage product of UQCRFS1). This cytochrome bc1 complex then forms a dimer.</text>
</comment>
<comment type="subcellular location">
    <subcellularLocation>
        <location evidence="2">Mitochondrion inner membrane</location>
        <topology evidence="2">Multi-pass membrane protein</topology>
    </subcellularLocation>
</comment>
<comment type="miscellaneous">
    <text evidence="1">Heme 1 (or BL or b562) is low-potential and absorbs at about 562 nm, and heme 2 (or BH or b566) is high-potential and absorbs at about 566 nm.</text>
</comment>
<comment type="similarity">
    <text evidence="3 4">Belongs to the cytochrome b family.</text>
</comment>
<comment type="caution">
    <text evidence="2">The full-length protein contains only eight transmembrane helices, not nine as predicted by bioinformatics tools.</text>
</comment>
<gene>
    <name type="primary">MT-CYB</name>
    <name type="synonym">COB</name>
    <name type="synonym">CYTB</name>
    <name type="synonym">MTCYB</name>
</gene>